<name>SNU71_YEAS7</name>
<gene>
    <name type="primary">SNU71</name>
    <name type="ORF">SCY_2237</name>
</gene>
<protein>
    <recommendedName>
        <fullName>U1 small nuclear ribonucleoprotein component SNU71</fullName>
    </recommendedName>
</protein>
<reference key="1">
    <citation type="journal article" date="2007" name="Proc. Natl. Acad. Sci. U.S.A.">
        <title>Genome sequencing and comparative analysis of Saccharomyces cerevisiae strain YJM789.</title>
        <authorList>
            <person name="Wei W."/>
            <person name="McCusker J.H."/>
            <person name="Hyman R.W."/>
            <person name="Jones T."/>
            <person name="Ning Y."/>
            <person name="Cao Z."/>
            <person name="Gu Z."/>
            <person name="Bruno D."/>
            <person name="Miranda M."/>
            <person name="Nguyen M."/>
            <person name="Wilhelmy J."/>
            <person name="Komp C."/>
            <person name="Tamse R."/>
            <person name="Wang X."/>
            <person name="Jia P."/>
            <person name="Luedi P."/>
            <person name="Oefner P.J."/>
            <person name="David L."/>
            <person name="Dietrich F.S."/>
            <person name="Li Y."/>
            <person name="Davis R.W."/>
            <person name="Steinmetz L.M."/>
        </authorList>
    </citation>
    <scope>NUCLEOTIDE SEQUENCE [LARGE SCALE GENOMIC DNA]</scope>
    <source>
        <strain>YJM789</strain>
    </source>
</reference>
<organism>
    <name type="scientific">Saccharomyces cerevisiae (strain YJM789)</name>
    <name type="common">Baker's yeast</name>
    <dbReference type="NCBI Taxonomy" id="307796"/>
    <lineage>
        <taxon>Eukaryota</taxon>
        <taxon>Fungi</taxon>
        <taxon>Dikarya</taxon>
        <taxon>Ascomycota</taxon>
        <taxon>Saccharomycotina</taxon>
        <taxon>Saccharomycetes</taxon>
        <taxon>Saccharomycetales</taxon>
        <taxon>Saccharomycetaceae</taxon>
        <taxon>Saccharomyces</taxon>
    </lineage>
</organism>
<evidence type="ECO:0000250" key="1"/>
<evidence type="ECO:0000250" key="2">
    <source>
        <dbReference type="UniProtKB" id="P53207"/>
    </source>
</evidence>
<evidence type="ECO:0000255" key="3"/>
<evidence type="ECO:0000256" key="4">
    <source>
        <dbReference type="SAM" id="MobiDB-lite"/>
    </source>
</evidence>
<evidence type="ECO:0000305" key="5"/>
<proteinExistence type="inferred from homology"/>
<feature type="chain" id="PRO_0000333461" description="U1 small nuclear ribonucleoprotein component SNU71">
    <location>
        <begin position="1"/>
        <end position="620"/>
    </location>
</feature>
<feature type="region of interest" description="Disordered" evidence="4">
    <location>
        <begin position="58"/>
        <end position="82"/>
    </location>
</feature>
<feature type="region of interest" description="Disordered" evidence="4">
    <location>
        <begin position="246"/>
        <end position="270"/>
    </location>
</feature>
<feature type="region of interest" description="Disordered" evidence="4">
    <location>
        <begin position="323"/>
        <end position="373"/>
    </location>
</feature>
<feature type="region of interest" description="Disordered" evidence="4">
    <location>
        <begin position="428"/>
        <end position="452"/>
    </location>
</feature>
<feature type="region of interest" description="Disordered" evidence="4">
    <location>
        <begin position="509"/>
        <end position="537"/>
    </location>
</feature>
<feature type="coiled-coil region" evidence="3">
    <location>
        <begin position="296"/>
        <end position="385"/>
    </location>
</feature>
<feature type="compositionally biased region" description="Polar residues" evidence="4">
    <location>
        <begin position="66"/>
        <end position="75"/>
    </location>
</feature>
<feature type="compositionally biased region" description="Basic and acidic residues" evidence="4">
    <location>
        <begin position="246"/>
        <end position="256"/>
    </location>
</feature>
<feature type="compositionally biased region" description="Polar residues" evidence="4">
    <location>
        <begin position="258"/>
        <end position="270"/>
    </location>
</feature>
<feature type="compositionally biased region" description="Acidic residues" evidence="4">
    <location>
        <begin position="335"/>
        <end position="355"/>
    </location>
</feature>
<feature type="compositionally biased region" description="Basic and acidic residues" evidence="4">
    <location>
        <begin position="356"/>
        <end position="373"/>
    </location>
</feature>
<feature type="compositionally biased region" description="Basic and acidic residues" evidence="4">
    <location>
        <begin position="431"/>
        <end position="445"/>
    </location>
</feature>
<feature type="compositionally biased region" description="Basic and acidic residues" evidence="4">
    <location>
        <begin position="517"/>
        <end position="537"/>
    </location>
</feature>
<feature type="modified residue" description="Phosphoserine" evidence="2">
    <location>
        <position position="512"/>
    </location>
</feature>
<feature type="modified residue" description="Phosphoserine" evidence="2">
    <location>
        <position position="514"/>
    </location>
</feature>
<keyword id="KW-0175">Coiled coil</keyword>
<keyword id="KW-0963">Cytoplasm</keyword>
<keyword id="KW-0507">mRNA processing</keyword>
<keyword id="KW-0508">mRNA splicing</keyword>
<keyword id="KW-0539">Nucleus</keyword>
<keyword id="KW-0597">Phosphoprotein</keyword>
<keyword id="KW-0687">Ribonucleoprotein</keyword>
<keyword id="KW-0694">RNA-binding</keyword>
<keyword id="KW-0747">Spliceosome</keyword>
<accession>A6ZV04</accession>
<comment type="function">
    <text evidence="1">Component of the U1 snRNP particle, which recognizes and binds the 5'-splice site of pre-mRNA. Together with other non-snRNP factors, U1 snRNP forms the spliceosomal commitment complex, that targets pre-mRNA to the splicing pathway (By similarity).</text>
</comment>
<comment type="subunit">
    <text evidence="1">Component of the U1 snRNP particle, a subcomplex of the spliceosome.</text>
</comment>
<comment type="subcellular location">
    <subcellularLocation>
        <location evidence="1">Cytoplasm</location>
    </subcellularLocation>
    <subcellularLocation>
        <location evidence="1">Nucleus</location>
    </subcellularLocation>
</comment>
<comment type="similarity">
    <text evidence="5">Belongs to the SNU71 family.</text>
</comment>
<sequence>MRDIVFVSPQLYLSSQEGWKSDSAKSGFIPILKNDLQRFQDSLKHIVDARNSLSETLLNSKDDGSIHNSDQNTGLNKDKEASIADNNSANKCATSSSRYQELKQFLPISLDQQIHTVSLQGVSSSFSRGQIESLLDHCLNLALTETQSNSALKVEAWSSFSSFLDTQDIFIRFSKVDEDEAFVNTLNYCKALFAFIRKLHEDFKIELHLDLNTKEYVEDRTGTIPSVKPEKASEFYSVFKNIEDQTDERNSKKEQLDDSSTQYKVDTNTLSDLPSDALDQLCKDIIEFRTKVVSIEKEKKMKSTYEESRRQRHQMQKVFDQIRKNHSGAKGSANTEEEDTNMEDEDEEDDTEDDLALEKRKEERDLEESNRRYEDMLHQLHSNTEPKIKSIRADIMSAENYEEHLEKNRSLYLKELLHLANDVHYDHHRSFKEQEERRDEEDRAKNGNAKELAPIQLSDGKAISAGKAAAITLPEGTVKSENYNADKNVSESSEHVKIKFDFKKAIDHSVESSSEDEGYRESELPPTKPSERSAAEDRLPFTADELNIRLTNLKESRYVDELVREFLGVYEDELVEYILENIRVNQSKQALLNELRETFDEDGETIADRLWSRKEFRLGT</sequence>
<dbReference type="EMBL" id="AAFW02000102">
    <property type="protein sequence ID" value="EDN61612.1"/>
    <property type="molecule type" value="Genomic_DNA"/>
</dbReference>
<dbReference type="SMR" id="A6ZV04"/>
<dbReference type="HOGENOM" id="CLU_031562_0_0_1"/>
<dbReference type="Proteomes" id="UP000007060">
    <property type="component" value="Unassembled WGS sequence"/>
</dbReference>
<dbReference type="GO" id="GO:0005737">
    <property type="term" value="C:cytoplasm"/>
    <property type="evidence" value="ECO:0007669"/>
    <property type="project" value="UniProtKB-SubCell"/>
</dbReference>
<dbReference type="GO" id="GO:0005681">
    <property type="term" value="C:spliceosomal complex"/>
    <property type="evidence" value="ECO:0007669"/>
    <property type="project" value="UniProtKB-KW"/>
</dbReference>
<dbReference type="GO" id="GO:0003723">
    <property type="term" value="F:RNA binding"/>
    <property type="evidence" value="ECO:0007669"/>
    <property type="project" value="UniProtKB-KW"/>
</dbReference>
<dbReference type="GO" id="GO:0006397">
    <property type="term" value="P:mRNA processing"/>
    <property type="evidence" value="ECO:0007669"/>
    <property type="project" value="UniProtKB-KW"/>
</dbReference>
<dbReference type="GO" id="GO:0008380">
    <property type="term" value="P:RNA splicing"/>
    <property type="evidence" value="ECO:0007669"/>
    <property type="project" value="UniProtKB-KW"/>
</dbReference>
<dbReference type="Gene3D" id="1.20.1390.10">
    <property type="entry name" value="PWI domain"/>
    <property type="match status" value="1"/>
</dbReference>
<dbReference type="InterPro" id="IPR002483">
    <property type="entry name" value="PWI_dom"/>
</dbReference>
<dbReference type="Pfam" id="PF24826">
    <property type="entry name" value="SNU71_N"/>
    <property type="match status" value="1"/>
</dbReference>
<dbReference type="Pfam" id="PF24825">
    <property type="entry name" value="SNU71_RBD"/>
    <property type="match status" value="1"/>
</dbReference>
<dbReference type="SMART" id="SM00311">
    <property type="entry name" value="PWI"/>
    <property type="match status" value="1"/>
</dbReference>